<protein>
    <recommendedName>
        <fullName evidence="1">tRNA-2-methylthio-N(6)-dimethylallyladenosine synthase</fullName>
        <ecNumber evidence="1">2.8.4.3</ecNumber>
    </recommendedName>
    <alternativeName>
        <fullName evidence="1">(Dimethylallyl)adenosine tRNA methylthiotransferase MiaB</fullName>
    </alternativeName>
    <alternativeName>
        <fullName evidence="1">tRNA-i(6)A37 methylthiotransferase</fullName>
    </alternativeName>
</protein>
<name>MIAB_WOLTR</name>
<comment type="function">
    <text evidence="1">Catalyzes the methylthiolation of N6-(dimethylallyl)adenosine (i(6)A), leading to the formation of 2-methylthio-N6-(dimethylallyl)adenosine (ms(2)i(6)A) at position 37 in tRNAs that read codons beginning with uridine.</text>
</comment>
<comment type="catalytic activity">
    <reaction evidence="1">
        <text>N(6)-dimethylallyladenosine(37) in tRNA + (sulfur carrier)-SH + AH2 + 2 S-adenosyl-L-methionine = 2-methylsulfanyl-N(6)-dimethylallyladenosine(37) in tRNA + (sulfur carrier)-H + 5'-deoxyadenosine + L-methionine + A + S-adenosyl-L-homocysteine + 2 H(+)</text>
        <dbReference type="Rhea" id="RHEA:37067"/>
        <dbReference type="Rhea" id="RHEA-COMP:10375"/>
        <dbReference type="Rhea" id="RHEA-COMP:10376"/>
        <dbReference type="Rhea" id="RHEA-COMP:14737"/>
        <dbReference type="Rhea" id="RHEA-COMP:14739"/>
        <dbReference type="ChEBI" id="CHEBI:13193"/>
        <dbReference type="ChEBI" id="CHEBI:15378"/>
        <dbReference type="ChEBI" id="CHEBI:17319"/>
        <dbReference type="ChEBI" id="CHEBI:17499"/>
        <dbReference type="ChEBI" id="CHEBI:29917"/>
        <dbReference type="ChEBI" id="CHEBI:57844"/>
        <dbReference type="ChEBI" id="CHEBI:57856"/>
        <dbReference type="ChEBI" id="CHEBI:59789"/>
        <dbReference type="ChEBI" id="CHEBI:64428"/>
        <dbReference type="ChEBI" id="CHEBI:74415"/>
        <dbReference type="ChEBI" id="CHEBI:74417"/>
        <dbReference type="EC" id="2.8.4.3"/>
    </reaction>
</comment>
<comment type="cofactor">
    <cofactor evidence="1">
        <name>[4Fe-4S] cluster</name>
        <dbReference type="ChEBI" id="CHEBI:49883"/>
    </cofactor>
    <text evidence="1">Binds 2 [4Fe-4S] clusters. One cluster is coordinated with 3 cysteines and an exchangeable S-adenosyl-L-methionine.</text>
</comment>
<comment type="subunit">
    <text evidence="1">Monomer.</text>
</comment>
<comment type="subcellular location">
    <subcellularLocation>
        <location evidence="1">Cytoplasm</location>
    </subcellularLocation>
</comment>
<comment type="similarity">
    <text evidence="1">Belongs to the methylthiotransferase family. MiaB subfamily.</text>
</comment>
<comment type="sequence caution" evidence="3">
    <conflict type="erroneous initiation">
        <sequence resource="EMBL-CDS" id="AAW70952"/>
    </conflict>
</comment>
<keyword id="KW-0004">4Fe-4S</keyword>
<keyword id="KW-0963">Cytoplasm</keyword>
<keyword id="KW-0408">Iron</keyword>
<keyword id="KW-0411">Iron-sulfur</keyword>
<keyword id="KW-0479">Metal-binding</keyword>
<keyword id="KW-1185">Reference proteome</keyword>
<keyword id="KW-0949">S-adenosyl-L-methionine</keyword>
<keyword id="KW-0808">Transferase</keyword>
<keyword id="KW-0819">tRNA processing</keyword>
<organism>
    <name type="scientific">Wolbachia sp. subsp. Brugia malayi (strain TRS)</name>
    <dbReference type="NCBI Taxonomy" id="292805"/>
    <lineage>
        <taxon>Bacteria</taxon>
        <taxon>Pseudomonadati</taxon>
        <taxon>Pseudomonadota</taxon>
        <taxon>Alphaproteobacteria</taxon>
        <taxon>Rickettsiales</taxon>
        <taxon>Anaplasmataceae</taxon>
        <taxon>Wolbachieae</taxon>
        <taxon>Wolbachia</taxon>
    </lineage>
</organism>
<gene>
    <name evidence="1" type="primary">miaB</name>
    <name type="ordered locus">Wbm0364</name>
</gene>
<sequence>MKSLYIKTYGCQMNVYDSILMENIIKPLGFNVVNDVEKADLVILNTCHIREKAAEKLYSELGKIHSSRKNKEITIVAAGCVAQAEGEEIFRRAPFVDIVVGPQSITTLPELIVKASRSKGHVINTDFPKVMKFDRLSDECYGNSQGSSAFLSIQEGCDKFCTFCVVPYTRGAEYSRPVNEIFREALKLVANGAKEINLLGQNVNAYHGEYEGEVWDLGKLISHIAKIEKLERIRYTTSHPRDMHESLYLAHAEAPKLMPFIHLPVQSGSNKILRAMNRKYTTEEYLEIIERFRKLKPKIEFSSDFIVGFPGETEKDFEGTIKLVERVRYAQAYSFKYSTRPGTPGAERKDQVPEKVKTERLLHLQKLINKQQLEFNQSMVGKTIPVLFSNKKGKHQNQIIGKSPYMQSVCIDDPEDKCRDKIVNVRILEAWQNSLLGRELQE</sequence>
<reference key="1">
    <citation type="journal article" date="2005" name="PLoS Biol.">
        <title>The Wolbachia genome of Brugia malayi: endosymbiont evolution within a human pathogenic nematode.</title>
        <authorList>
            <person name="Foster J."/>
            <person name="Ganatra M."/>
            <person name="Kamal I."/>
            <person name="Ware J."/>
            <person name="Makarova K."/>
            <person name="Ivanova N."/>
            <person name="Bhattacharyya A."/>
            <person name="Kapatral V."/>
            <person name="Kumar S."/>
            <person name="Posfai J."/>
            <person name="Vincze T."/>
            <person name="Ingram J."/>
            <person name="Moran L."/>
            <person name="Lapidus A."/>
            <person name="Omelchenko M."/>
            <person name="Kyrpides N."/>
            <person name="Ghedin E."/>
            <person name="Wang S."/>
            <person name="Goltsman E."/>
            <person name="Joukov V."/>
            <person name="Ostrovskaya O."/>
            <person name="Tsukerman K."/>
            <person name="Mazur M."/>
            <person name="Comb D."/>
            <person name="Koonin E."/>
            <person name="Slatko B."/>
        </authorList>
    </citation>
    <scope>NUCLEOTIDE SEQUENCE [LARGE SCALE GENOMIC DNA]</scope>
    <source>
        <strain>TRS</strain>
    </source>
</reference>
<accession>Q5GSS2</accession>
<proteinExistence type="inferred from homology"/>
<evidence type="ECO:0000255" key="1">
    <source>
        <dbReference type="HAMAP-Rule" id="MF_01864"/>
    </source>
</evidence>
<evidence type="ECO:0000255" key="2">
    <source>
        <dbReference type="PROSITE-ProRule" id="PRU01266"/>
    </source>
</evidence>
<evidence type="ECO:0000305" key="3"/>
<dbReference type="EC" id="2.8.4.3" evidence="1"/>
<dbReference type="EMBL" id="AE017321">
    <property type="protein sequence ID" value="AAW70952.1"/>
    <property type="status" value="ALT_INIT"/>
    <property type="molecule type" value="Genomic_DNA"/>
</dbReference>
<dbReference type="RefSeq" id="WP_041571560.1">
    <property type="nucleotide sequence ID" value="NC_006833.1"/>
</dbReference>
<dbReference type="SMR" id="Q5GSS2"/>
<dbReference type="STRING" id="292805.Wbm0364"/>
<dbReference type="KEGG" id="wbm:Wbm0364"/>
<dbReference type="eggNOG" id="COG0621">
    <property type="taxonomic scope" value="Bacteria"/>
</dbReference>
<dbReference type="HOGENOM" id="CLU_018697_2_0_5"/>
<dbReference type="Proteomes" id="UP000000534">
    <property type="component" value="Chromosome"/>
</dbReference>
<dbReference type="GO" id="GO:0005829">
    <property type="term" value="C:cytosol"/>
    <property type="evidence" value="ECO:0007669"/>
    <property type="project" value="TreeGrafter"/>
</dbReference>
<dbReference type="GO" id="GO:0051539">
    <property type="term" value="F:4 iron, 4 sulfur cluster binding"/>
    <property type="evidence" value="ECO:0007669"/>
    <property type="project" value="UniProtKB-UniRule"/>
</dbReference>
<dbReference type="GO" id="GO:0046872">
    <property type="term" value="F:metal ion binding"/>
    <property type="evidence" value="ECO:0007669"/>
    <property type="project" value="UniProtKB-KW"/>
</dbReference>
<dbReference type="GO" id="GO:0035597">
    <property type="term" value="F:N6-isopentenyladenosine methylthiotransferase activity"/>
    <property type="evidence" value="ECO:0007669"/>
    <property type="project" value="TreeGrafter"/>
</dbReference>
<dbReference type="CDD" id="cd01335">
    <property type="entry name" value="Radical_SAM"/>
    <property type="match status" value="1"/>
</dbReference>
<dbReference type="FunFam" id="3.40.50.12160:FF:000003">
    <property type="entry name" value="CDK5 regulatory subunit-associated protein 1"/>
    <property type="match status" value="1"/>
</dbReference>
<dbReference type="FunFam" id="3.80.30.20:FF:000001">
    <property type="entry name" value="tRNA-2-methylthio-N(6)-dimethylallyladenosine synthase 2"/>
    <property type="match status" value="1"/>
</dbReference>
<dbReference type="Gene3D" id="3.40.50.12160">
    <property type="entry name" value="Methylthiotransferase, N-terminal domain"/>
    <property type="match status" value="1"/>
</dbReference>
<dbReference type="Gene3D" id="3.80.30.20">
    <property type="entry name" value="tm_1862 like domain"/>
    <property type="match status" value="1"/>
</dbReference>
<dbReference type="HAMAP" id="MF_01864">
    <property type="entry name" value="tRNA_metthiotr_MiaB"/>
    <property type="match status" value="1"/>
</dbReference>
<dbReference type="InterPro" id="IPR006638">
    <property type="entry name" value="Elp3/MiaA/NifB-like_rSAM"/>
</dbReference>
<dbReference type="InterPro" id="IPR005839">
    <property type="entry name" value="Methylthiotransferase"/>
</dbReference>
<dbReference type="InterPro" id="IPR020612">
    <property type="entry name" value="Methylthiotransferase_CS"/>
</dbReference>
<dbReference type="InterPro" id="IPR013848">
    <property type="entry name" value="Methylthiotransferase_N"/>
</dbReference>
<dbReference type="InterPro" id="IPR038135">
    <property type="entry name" value="Methylthiotransferase_N_sf"/>
</dbReference>
<dbReference type="InterPro" id="IPR006463">
    <property type="entry name" value="MiaB_methiolase"/>
</dbReference>
<dbReference type="InterPro" id="IPR007197">
    <property type="entry name" value="rSAM"/>
</dbReference>
<dbReference type="InterPro" id="IPR023404">
    <property type="entry name" value="rSAM_horseshoe"/>
</dbReference>
<dbReference type="InterPro" id="IPR002792">
    <property type="entry name" value="TRAM_dom"/>
</dbReference>
<dbReference type="NCBIfam" id="TIGR01574">
    <property type="entry name" value="miaB-methiolase"/>
    <property type="match status" value="1"/>
</dbReference>
<dbReference type="NCBIfam" id="TIGR00089">
    <property type="entry name" value="MiaB/RimO family radical SAM methylthiotransferase"/>
    <property type="match status" value="1"/>
</dbReference>
<dbReference type="PANTHER" id="PTHR43020">
    <property type="entry name" value="CDK5 REGULATORY SUBUNIT-ASSOCIATED PROTEIN 1"/>
    <property type="match status" value="1"/>
</dbReference>
<dbReference type="PANTHER" id="PTHR43020:SF2">
    <property type="entry name" value="MITOCHONDRIAL TRNA METHYLTHIOTRANSFERASE CDK5RAP1"/>
    <property type="match status" value="1"/>
</dbReference>
<dbReference type="Pfam" id="PF04055">
    <property type="entry name" value="Radical_SAM"/>
    <property type="match status" value="1"/>
</dbReference>
<dbReference type="Pfam" id="PF01938">
    <property type="entry name" value="TRAM"/>
    <property type="match status" value="1"/>
</dbReference>
<dbReference type="Pfam" id="PF00919">
    <property type="entry name" value="UPF0004"/>
    <property type="match status" value="1"/>
</dbReference>
<dbReference type="SFLD" id="SFLDF00273">
    <property type="entry name" value="(dimethylallyl)adenosine_tRNA"/>
    <property type="match status" value="1"/>
</dbReference>
<dbReference type="SFLD" id="SFLDG01082">
    <property type="entry name" value="B12-binding_domain_containing"/>
    <property type="match status" value="1"/>
</dbReference>
<dbReference type="SFLD" id="SFLDG01061">
    <property type="entry name" value="methylthiotransferase"/>
    <property type="match status" value="1"/>
</dbReference>
<dbReference type="SMART" id="SM00729">
    <property type="entry name" value="Elp3"/>
    <property type="match status" value="1"/>
</dbReference>
<dbReference type="SUPFAM" id="SSF102114">
    <property type="entry name" value="Radical SAM enzymes"/>
    <property type="match status" value="1"/>
</dbReference>
<dbReference type="PROSITE" id="PS51449">
    <property type="entry name" value="MTTASE_N"/>
    <property type="match status" value="1"/>
</dbReference>
<dbReference type="PROSITE" id="PS01278">
    <property type="entry name" value="MTTASE_RADICAL"/>
    <property type="match status" value="1"/>
</dbReference>
<dbReference type="PROSITE" id="PS51918">
    <property type="entry name" value="RADICAL_SAM"/>
    <property type="match status" value="1"/>
</dbReference>
<dbReference type="PROSITE" id="PS50926">
    <property type="entry name" value="TRAM"/>
    <property type="match status" value="1"/>
</dbReference>
<feature type="chain" id="PRO_0000374639" description="tRNA-2-methylthio-N(6)-dimethylallyladenosine synthase">
    <location>
        <begin position="1"/>
        <end position="442"/>
    </location>
</feature>
<feature type="domain" description="MTTase N-terminal" evidence="1">
    <location>
        <begin position="2"/>
        <end position="117"/>
    </location>
</feature>
<feature type="domain" description="Radical SAM core" evidence="2">
    <location>
        <begin position="143"/>
        <end position="374"/>
    </location>
</feature>
<feature type="domain" description="TRAM" evidence="1">
    <location>
        <begin position="377"/>
        <end position="441"/>
    </location>
</feature>
<feature type="binding site" evidence="1">
    <location>
        <position position="11"/>
    </location>
    <ligand>
        <name>[4Fe-4S] cluster</name>
        <dbReference type="ChEBI" id="CHEBI:49883"/>
        <label>1</label>
    </ligand>
</feature>
<feature type="binding site" evidence="1">
    <location>
        <position position="47"/>
    </location>
    <ligand>
        <name>[4Fe-4S] cluster</name>
        <dbReference type="ChEBI" id="CHEBI:49883"/>
        <label>1</label>
    </ligand>
</feature>
<feature type="binding site" evidence="1">
    <location>
        <position position="80"/>
    </location>
    <ligand>
        <name>[4Fe-4S] cluster</name>
        <dbReference type="ChEBI" id="CHEBI:49883"/>
        <label>1</label>
    </ligand>
</feature>
<feature type="binding site" evidence="1">
    <location>
        <position position="157"/>
    </location>
    <ligand>
        <name>[4Fe-4S] cluster</name>
        <dbReference type="ChEBI" id="CHEBI:49883"/>
        <label>2</label>
        <note>4Fe-4S-S-AdoMet</note>
    </ligand>
</feature>
<feature type="binding site" evidence="1">
    <location>
        <position position="161"/>
    </location>
    <ligand>
        <name>[4Fe-4S] cluster</name>
        <dbReference type="ChEBI" id="CHEBI:49883"/>
        <label>2</label>
        <note>4Fe-4S-S-AdoMet</note>
    </ligand>
</feature>
<feature type="binding site" evidence="1">
    <location>
        <position position="164"/>
    </location>
    <ligand>
        <name>[4Fe-4S] cluster</name>
        <dbReference type="ChEBI" id="CHEBI:49883"/>
        <label>2</label>
        <note>4Fe-4S-S-AdoMet</note>
    </ligand>
</feature>